<keyword id="KW-0067">ATP-binding</keyword>
<keyword id="KW-1003">Cell membrane</keyword>
<keyword id="KW-0378">Hydrolase</keyword>
<keyword id="KW-0472">Membrane</keyword>
<keyword id="KW-0547">Nucleotide-binding</keyword>
<keyword id="KW-1185">Reference proteome</keyword>
<keyword id="KW-0812">Transmembrane</keyword>
<keyword id="KW-1133">Transmembrane helix</keyword>
<gene>
    <name type="primary">eccB2</name>
    <name type="ordered locus">Rv3895c</name>
</gene>
<evidence type="ECO:0000250" key="1">
    <source>
        <dbReference type="UniProtKB" id="P9WNR7"/>
    </source>
</evidence>
<evidence type="ECO:0000255" key="2"/>
<evidence type="ECO:0000305" key="3"/>
<feature type="chain" id="PRO_0000393229" description="ESX-2 secretion system ATPase EccB2">
    <location>
        <begin position="1"/>
        <end position="495"/>
    </location>
</feature>
<feature type="transmembrane region" description="Helical" evidence="2">
    <location>
        <begin position="43"/>
        <end position="63"/>
    </location>
</feature>
<protein>
    <recommendedName>
        <fullName>ESX-2 secretion system ATPase EccB2</fullName>
        <ecNumber evidence="3">3.6.-.-</ecNumber>
    </recommendedName>
    <alternativeName>
        <fullName>ESX conserved component B2</fullName>
    </alternativeName>
    <alternativeName>
        <fullName>Type VII secretion system protein EccB2</fullName>
        <shortName>T7SS protein EccB2</shortName>
    </alternativeName>
</protein>
<proteinExistence type="evidence at protein level"/>
<sequence length="495" mass="51587">MPLSLSNRDQNSGHLFYNRRLRAATTRFSVRMKHDDRKQTAALALSMVLVAIAAGWMMLLNVLKPTGIVGDSAIIGDRDSGALYARIDGRLYPALNLTSARLATGTAGQPTWVKPAEIAKYPTGPLVGIPGAPAAMPVNRGAVSAWAVCDTAGRPRSADKPVVTSIAGPITGGGRATHLRDDAGLLVTFDGSTYVIWGGKRSQIDPTNRAVTLSLGLDPGVTSPIQISRALFDGLPATEPLRVPAVPEAGTPSTWVPGARVGSVLQAQTAGGGSQFYVLLPDGVQKISSFVADLLRSANSYGAAAPRVVTPDVLVHTPQVTSLPVEYYPAGRLNFVDTAADPTTCVSWEKASTDPQARVAVYNGRGLPVPPSMDSRIVRLVRDDRAPASVVATQVLVLPGAANFVTSTSGVITAESRESLFWVSGNGVRFGIANDEATLRALGLDPGAAVQAPWPLLRTFAAGPALSRDAALLARDTVPTLGQVAIVTTTAKAGA</sequence>
<name>ECCB2_MYCTU</name>
<accession>P9WNR5</accession>
<accession>L0TE37</accession>
<accession>O05449</accession>
<accession>Q7D4N1</accession>
<reference key="1">
    <citation type="journal article" date="1998" name="Nature">
        <title>Deciphering the biology of Mycobacterium tuberculosis from the complete genome sequence.</title>
        <authorList>
            <person name="Cole S.T."/>
            <person name="Brosch R."/>
            <person name="Parkhill J."/>
            <person name="Garnier T."/>
            <person name="Churcher C.M."/>
            <person name="Harris D.E."/>
            <person name="Gordon S.V."/>
            <person name="Eiglmeier K."/>
            <person name="Gas S."/>
            <person name="Barry C.E. III"/>
            <person name="Tekaia F."/>
            <person name="Badcock K."/>
            <person name="Basham D."/>
            <person name="Brown D."/>
            <person name="Chillingworth T."/>
            <person name="Connor R."/>
            <person name="Davies R.M."/>
            <person name="Devlin K."/>
            <person name="Feltwell T."/>
            <person name="Gentles S."/>
            <person name="Hamlin N."/>
            <person name="Holroyd S."/>
            <person name="Hornsby T."/>
            <person name="Jagels K."/>
            <person name="Krogh A."/>
            <person name="McLean J."/>
            <person name="Moule S."/>
            <person name="Murphy L.D."/>
            <person name="Oliver S."/>
            <person name="Osborne J."/>
            <person name="Quail M.A."/>
            <person name="Rajandream M.A."/>
            <person name="Rogers J."/>
            <person name="Rutter S."/>
            <person name="Seeger K."/>
            <person name="Skelton S."/>
            <person name="Squares S."/>
            <person name="Squares R."/>
            <person name="Sulston J.E."/>
            <person name="Taylor K."/>
            <person name="Whitehead S."/>
            <person name="Barrell B.G."/>
        </authorList>
    </citation>
    <scope>NUCLEOTIDE SEQUENCE [LARGE SCALE GENOMIC DNA]</scope>
    <source>
        <strain>ATCC 25618 / H37Rv</strain>
    </source>
</reference>
<reference key="2">
    <citation type="journal article" date="2009" name="PLoS Pathog.">
        <title>Systematic genetic nomenclature for type VII secretion systems.</title>
        <authorList>
            <person name="Bitter W."/>
            <person name="Houben E.N."/>
            <person name="Bottai D."/>
            <person name="Brodin P."/>
            <person name="Brown E.J."/>
            <person name="Cox J.S."/>
            <person name="Derbyshire K."/>
            <person name="Fortune S.M."/>
            <person name="Gao L.Y."/>
            <person name="Liu J."/>
            <person name="Gey van Pittius N.C."/>
            <person name="Pym A.S."/>
            <person name="Rubin E.J."/>
            <person name="Sherman D.R."/>
            <person name="Cole S.T."/>
            <person name="Brosch R."/>
        </authorList>
    </citation>
    <scope>GENE NAME</scope>
</reference>
<reference key="3">
    <citation type="journal article" date="2011" name="Mol. Cell. Proteomics">
        <title>Proteogenomic analysis of Mycobacterium tuberculosis by high resolution mass spectrometry.</title>
        <authorList>
            <person name="Kelkar D.S."/>
            <person name="Kumar D."/>
            <person name="Kumar P."/>
            <person name="Balakrishnan L."/>
            <person name="Muthusamy B."/>
            <person name="Yadav A.K."/>
            <person name="Shrivastava P."/>
            <person name="Marimuthu A."/>
            <person name="Anand S."/>
            <person name="Sundaram H."/>
            <person name="Kingsbury R."/>
            <person name="Harsha H.C."/>
            <person name="Nair B."/>
            <person name="Prasad T.S."/>
            <person name="Chauhan D.S."/>
            <person name="Katoch K."/>
            <person name="Katoch V.M."/>
            <person name="Kumar P."/>
            <person name="Chaerkady R."/>
            <person name="Ramachandran S."/>
            <person name="Dash D."/>
            <person name="Pandey A."/>
        </authorList>
    </citation>
    <scope>IDENTIFICATION BY MASS SPECTROMETRY [LARGE SCALE ANALYSIS]</scope>
    <source>
        <strain>ATCC 25618 / H37Rv</strain>
    </source>
</reference>
<comment type="function">
    <text evidence="1">An ATPase (By similarity).</text>
</comment>
<comment type="subunit">
    <text evidence="1">Part of the ESX-2 / type VII secretion system (T7SS), which is composed of cytosolic and membrane components.</text>
</comment>
<comment type="subcellular location">
    <subcellularLocation>
        <location evidence="3">Cell membrane</location>
        <topology evidence="3">Single-pass membrane protein</topology>
    </subcellularLocation>
</comment>
<comment type="similarity">
    <text evidence="3">Belongs to the EccB family.</text>
</comment>
<organism>
    <name type="scientific">Mycobacterium tuberculosis (strain ATCC 25618 / H37Rv)</name>
    <dbReference type="NCBI Taxonomy" id="83332"/>
    <lineage>
        <taxon>Bacteria</taxon>
        <taxon>Bacillati</taxon>
        <taxon>Actinomycetota</taxon>
        <taxon>Actinomycetes</taxon>
        <taxon>Mycobacteriales</taxon>
        <taxon>Mycobacteriaceae</taxon>
        <taxon>Mycobacterium</taxon>
        <taxon>Mycobacterium tuberculosis complex</taxon>
    </lineage>
</organism>
<dbReference type="EC" id="3.6.-.-" evidence="3"/>
<dbReference type="EMBL" id="AL123456">
    <property type="protein sequence ID" value="CCP46724.1"/>
    <property type="molecule type" value="Genomic_DNA"/>
</dbReference>
<dbReference type="PIR" id="H70598">
    <property type="entry name" value="H70598"/>
</dbReference>
<dbReference type="RefSeq" id="NP_218412.1">
    <property type="nucleotide sequence ID" value="NC_000962.3"/>
</dbReference>
<dbReference type="RefSeq" id="WP_003400065.1">
    <property type="nucleotide sequence ID" value="NZ_NVQJ01000005.1"/>
</dbReference>
<dbReference type="SMR" id="P9WNR5"/>
<dbReference type="STRING" id="83332.Rv3895c"/>
<dbReference type="PaxDb" id="83332-Rv3895c"/>
<dbReference type="DNASU" id="886231"/>
<dbReference type="GeneID" id="886231"/>
<dbReference type="KEGG" id="mtu:Rv3895c"/>
<dbReference type="KEGG" id="mtv:RVBD_3895c"/>
<dbReference type="TubercuList" id="Rv3895c"/>
<dbReference type="eggNOG" id="COG3266">
    <property type="taxonomic scope" value="Bacteria"/>
</dbReference>
<dbReference type="InParanoid" id="P9WNR5"/>
<dbReference type="OrthoDB" id="3847604at2"/>
<dbReference type="PhylomeDB" id="P9WNR5"/>
<dbReference type="Proteomes" id="UP000001584">
    <property type="component" value="Chromosome"/>
</dbReference>
<dbReference type="GO" id="GO:0005886">
    <property type="term" value="C:plasma membrane"/>
    <property type="evidence" value="ECO:0007669"/>
    <property type="project" value="UniProtKB-SubCell"/>
</dbReference>
<dbReference type="GO" id="GO:0005524">
    <property type="term" value="F:ATP binding"/>
    <property type="evidence" value="ECO:0007669"/>
    <property type="project" value="UniProtKB-KW"/>
</dbReference>
<dbReference type="GO" id="GO:0016787">
    <property type="term" value="F:hydrolase activity"/>
    <property type="evidence" value="ECO:0007669"/>
    <property type="project" value="UniProtKB-KW"/>
</dbReference>
<dbReference type="Gene3D" id="3.30.2390.20">
    <property type="entry name" value="Type VII secretion system EccB, repeat 1 domain"/>
    <property type="match status" value="1"/>
</dbReference>
<dbReference type="Gene3D" id="2.40.50.910">
    <property type="entry name" value="Type VII secretion system EccB, repeat 3 domain"/>
    <property type="match status" value="1"/>
</dbReference>
<dbReference type="InterPro" id="IPR007795">
    <property type="entry name" value="T7SS_EccB"/>
</dbReference>
<dbReference type="InterPro" id="IPR044857">
    <property type="entry name" value="T7SS_EccB_R1"/>
</dbReference>
<dbReference type="InterPro" id="IPR042485">
    <property type="entry name" value="T7SS_EccB_R3"/>
</dbReference>
<dbReference type="NCBIfam" id="TIGR03919">
    <property type="entry name" value="T7SS_EccB"/>
    <property type="match status" value="1"/>
</dbReference>
<dbReference type="PANTHER" id="PTHR40765">
    <property type="entry name" value="ESX-2 SECRETION SYSTEM ATPASE ECCB2"/>
    <property type="match status" value="1"/>
</dbReference>
<dbReference type="PANTHER" id="PTHR40765:SF2">
    <property type="entry name" value="ESX-2 SECRETION SYSTEM ATPASE ECCB2"/>
    <property type="match status" value="1"/>
</dbReference>
<dbReference type="Pfam" id="PF05108">
    <property type="entry name" value="T7SS_ESX1_EccB"/>
    <property type="match status" value="1"/>
</dbReference>